<protein>
    <recommendedName>
        <fullName evidence="1">Aspartate--tRNA ligase</fullName>
        <ecNumber evidence="1">6.1.1.12</ecNumber>
    </recommendedName>
    <alternativeName>
        <fullName evidence="1">Aspartyl-tRNA synthetase</fullName>
        <shortName evidence="1">AspRS</shortName>
    </alternativeName>
</protein>
<accession>Q5X9E6</accession>
<name>SYD_STRP6</name>
<evidence type="ECO:0000255" key="1">
    <source>
        <dbReference type="HAMAP-Rule" id="MF_00044"/>
    </source>
</evidence>
<evidence type="ECO:0000305" key="2"/>
<reference key="1">
    <citation type="journal article" date="2004" name="J. Infect. Dis.">
        <title>Progress toward characterization of the group A Streptococcus metagenome: complete genome sequence of a macrolide-resistant serotype M6 strain.</title>
        <authorList>
            <person name="Banks D.J."/>
            <person name="Porcella S.F."/>
            <person name="Barbian K.D."/>
            <person name="Beres S.B."/>
            <person name="Philips L.E."/>
            <person name="Voyich J.M."/>
            <person name="DeLeo F.R."/>
            <person name="Martin J.M."/>
            <person name="Somerville G.A."/>
            <person name="Musser J.M."/>
        </authorList>
    </citation>
    <scope>NUCLEOTIDE SEQUENCE [LARGE SCALE GENOMIC DNA]</scope>
    <source>
        <strain>ATCC BAA-946 / MGAS10394</strain>
    </source>
</reference>
<dbReference type="EC" id="6.1.1.12" evidence="1"/>
<dbReference type="EMBL" id="CP000003">
    <property type="protein sequence ID" value="AAT87967.1"/>
    <property type="status" value="ALT_INIT"/>
    <property type="molecule type" value="Genomic_DNA"/>
</dbReference>
<dbReference type="RefSeq" id="WP_021340422.1">
    <property type="nucleotide sequence ID" value="NC_006086.1"/>
</dbReference>
<dbReference type="SMR" id="Q5X9E6"/>
<dbReference type="KEGG" id="spa:M6_Spy1832"/>
<dbReference type="HOGENOM" id="CLU_014330_3_2_9"/>
<dbReference type="Proteomes" id="UP000001167">
    <property type="component" value="Chromosome"/>
</dbReference>
<dbReference type="GO" id="GO:0005737">
    <property type="term" value="C:cytoplasm"/>
    <property type="evidence" value="ECO:0007669"/>
    <property type="project" value="UniProtKB-SubCell"/>
</dbReference>
<dbReference type="GO" id="GO:0004815">
    <property type="term" value="F:aspartate-tRNA ligase activity"/>
    <property type="evidence" value="ECO:0007669"/>
    <property type="project" value="UniProtKB-UniRule"/>
</dbReference>
<dbReference type="GO" id="GO:0005524">
    <property type="term" value="F:ATP binding"/>
    <property type="evidence" value="ECO:0007669"/>
    <property type="project" value="UniProtKB-UniRule"/>
</dbReference>
<dbReference type="GO" id="GO:0140096">
    <property type="term" value="F:catalytic activity, acting on a protein"/>
    <property type="evidence" value="ECO:0007669"/>
    <property type="project" value="UniProtKB-ARBA"/>
</dbReference>
<dbReference type="GO" id="GO:0003676">
    <property type="term" value="F:nucleic acid binding"/>
    <property type="evidence" value="ECO:0007669"/>
    <property type="project" value="InterPro"/>
</dbReference>
<dbReference type="GO" id="GO:0016740">
    <property type="term" value="F:transferase activity"/>
    <property type="evidence" value="ECO:0007669"/>
    <property type="project" value="UniProtKB-ARBA"/>
</dbReference>
<dbReference type="GO" id="GO:0006422">
    <property type="term" value="P:aspartyl-tRNA aminoacylation"/>
    <property type="evidence" value="ECO:0007669"/>
    <property type="project" value="UniProtKB-UniRule"/>
</dbReference>
<dbReference type="CDD" id="cd00777">
    <property type="entry name" value="AspRS_core"/>
    <property type="match status" value="1"/>
</dbReference>
<dbReference type="CDD" id="cd04317">
    <property type="entry name" value="EcAspRS_like_N"/>
    <property type="match status" value="1"/>
</dbReference>
<dbReference type="Gene3D" id="3.30.930.10">
    <property type="entry name" value="Bira Bifunctional Protein, Domain 2"/>
    <property type="match status" value="1"/>
</dbReference>
<dbReference type="Gene3D" id="3.30.1360.30">
    <property type="entry name" value="GAD-like domain"/>
    <property type="match status" value="1"/>
</dbReference>
<dbReference type="Gene3D" id="2.40.50.140">
    <property type="entry name" value="Nucleic acid-binding proteins"/>
    <property type="match status" value="1"/>
</dbReference>
<dbReference type="HAMAP" id="MF_00044">
    <property type="entry name" value="Asp_tRNA_synth_type1"/>
    <property type="match status" value="1"/>
</dbReference>
<dbReference type="InterPro" id="IPR004364">
    <property type="entry name" value="Aa-tRNA-synt_II"/>
</dbReference>
<dbReference type="InterPro" id="IPR006195">
    <property type="entry name" value="aa-tRNA-synth_II"/>
</dbReference>
<dbReference type="InterPro" id="IPR045864">
    <property type="entry name" value="aa-tRNA-synth_II/BPL/LPL"/>
</dbReference>
<dbReference type="InterPro" id="IPR004524">
    <property type="entry name" value="Asp-tRNA-ligase_1"/>
</dbReference>
<dbReference type="InterPro" id="IPR047089">
    <property type="entry name" value="Asp-tRNA-ligase_1_N"/>
</dbReference>
<dbReference type="InterPro" id="IPR002312">
    <property type="entry name" value="Asp/Asn-tRNA-synth_IIb"/>
</dbReference>
<dbReference type="InterPro" id="IPR047090">
    <property type="entry name" value="AspRS_core"/>
</dbReference>
<dbReference type="InterPro" id="IPR004115">
    <property type="entry name" value="GAD-like_sf"/>
</dbReference>
<dbReference type="InterPro" id="IPR029351">
    <property type="entry name" value="GAD_dom"/>
</dbReference>
<dbReference type="InterPro" id="IPR012340">
    <property type="entry name" value="NA-bd_OB-fold"/>
</dbReference>
<dbReference type="InterPro" id="IPR004365">
    <property type="entry name" value="NA-bd_OB_tRNA"/>
</dbReference>
<dbReference type="NCBIfam" id="TIGR00459">
    <property type="entry name" value="aspS_bact"/>
    <property type="match status" value="1"/>
</dbReference>
<dbReference type="NCBIfam" id="NF001750">
    <property type="entry name" value="PRK00476.1"/>
    <property type="match status" value="1"/>
</dbReference>
<dbReference type="PANTHER" id="PTHR22594:SF5">
    <property type="entry name" value="ASPARTATE--TRNA LIGASE, MITOCHONDRIAL"/>
    <property type="match status" value="1"/>
</dbReference>
<dbReference type="PANTHER" id="PTHR22594">
    <property type="entry name" value="ASPARTYL/LYSYL-TRNA SYNTHETASE"/>
    <property type="match status" value="1"/>
</dbReference>
<dbReference type="Pfam" id="PF02938">
    <property type="entry name" value="GAD"/>
    <property type="match status" value="1"/>
</dbReference>
<dbReference type="Pfam" id="PF00152">
    <property type="entry name" value="tRNA-synt_2"/>
    <property type="match status" value="1"/>
</dbReference>
<dbReference type="Pfam" id="PF01336">
    <property type="entry name" value="tRNA_anti-codon"/>
    <property type="match status" value="1"/>
</dbReference>
<dbReference type="PRINTS" id="PR01042">
    <property type="entry name" value="TRNASYNTHASP"/>
</dbReference>
<dbReference type="SUPFAM" id="SSF55681">
    <property type="entry name" value="Class II aaRS and biotin synthetases"/>
    <property type="match status" value="1"/>
</dbReference>
<dbReference type="SUPFAM" id="SSF55261">
    <property type="entry name" value="GAD domain-like"/>
    <property type="match status" value="1"/>
</dbReference>
<dbReference type="SUPFAM" id="SSF50249">
    <property type="entry name" value="Nucleic acid-binding proteins"/>
    <property type="match status" value="1"/>
</dbReference>
<dbReference type="PROSITE" id="PS50862">
    <property type="entry name" value="AA_TRNA_LIGASE_II"/>
    <property type="match status" value="1"/>
</dbReference>
<comment type="function">
    <text evidence="1">Catalyzes the attachment of L-aspartate to tRNA(Asp) in a two-step reaction: L-aspartate is first activated by ATP to form Asp-AMP and then transferred to the acceptor end of tRNA(Asp).</text>
</comment>
<comment type="catalytic activity">
    <reaction evidence="1">
        <text>tRNA(Asp) + L-aspartate + ATP = L-aspartyl-tRNA(Asp) + AMP + diphosphate</text>
        <dbReference type="Rhea" id="RHEA:19649"/>
        <dbReference type="Rhea" id="RHEA-COMP:9660"/>
        <dbReference type="Rhea" id="RHEA-COMP:9678"/>
        <dbReference type="ChEBI" id="CHEBI:29991"/>
        <dbReference type="ChEBI" id="CHEBI:30616"/>
        <dbReference type="ChEBI" id="CHEBI:33019"/>
        <dbReference type="ChEBI" id="CHEBI:78442"/>
        <dbReference type="ChEBI" id="CHEBI:78516"/>
        <dbReference type="ChEBI" id="CHEBI:456215"/>
        <dbReference type="EC" id="6.1.1.12"/>
    </reaction>
</comment>
<comment type="subunit">
    <text evidence="1">Homodimer.</text>
</comment>
<comment type="subcellular location">
    <subcellularLocation>
        <location evidence="1">Cytoplasm</location>
    </subcellularLocation>
</comment>
<comment type="similarity">
    <text evidence="1">Belongs to the class-II aminoacyl-tRNA synthetase family. Type 1 subfamily.</text>
</comment>
<comment type="sequence caution" evidence="2">
    <conflict type="erroneous initiation">
        <sequence resource="EMBL-CDS" id="AAT87967"/>
    </conflict>
    <text>Extended N-terminus.</text>
</comment>
<sequence>MKRSMYAGRVREEHIGTTITLKGWVSRRRDLGGLIFIDLRDREGVMQLVINPEEVSSDVMATAERLRSEYVIEVEGFVEARQQANDKLATGMVELKVSALTILNTAKTTPFEIKDDVEVSDDTRLRYRYLDLRRPEMLENFKLRAKVTHSIRNYLDDLEFIDVETPMLTKSTPEGARDYLVPSRVSQGHFYALPQSPQITKQLLMNAGFDRYYQIVKCFRDEDLRGDRQPEFTQVDLETSFLSEQEIQDIVEGMIAKVMKETKEIDVTLPFPRMSYDVAMNSYGSDKPDTRFEMLLQDLTVTVKGIDFKVFSEAPAVKAIVVKGNADRYSRKDIDKLTEFAKQFGAKGLAWVKVTDGQLAGPVAKFLTAIETELSSQLKLAENDLVLFVADTLEVANNTLGALRNRIARDLDMIDQSQFNFLWVVDWPMFEWSEEEGRYMSAHHPFTLPTPESAHELEGDLAKVRAIAYDIVLNGYELGGGSLRINQKEMQERMFKALGFTADEANDQFGFLLEAMDYGFPPHGGLAIGLDRFVMLLAEEDNIREVIAFPKNNKASDPMTQAPSLVSENQLEELSLQIESHD</sequence>
<organism>
    <name type="scientific">Streptococcus pyogenes serotype M6 (strain ATCC BAA-946 / MGAS10394)</name>
    <dbReference type="NCBI Taxonomy" id="286636"/>
    <lineage>
        <taxon>Bacteria</taxon>
        <taxon>Bacillati</taxon>
        <taxon>Bacillota</taxon>
        <taxon>Bacilli</taxon>
        <taxon>Lactobacillales</taxon>
        <taxon>Streptococcaceae</taxon>
        <taxon>Streptococcus</taxon>
    </lineage>
</organism>
<gene>
    <name evidence="1" type="primary">aspS</name>
    <name type="ordered locus">M6_Spy1832</name>
</gene>
<keyword id="KW-0030">Aminoacyl-tRNA synthetase</keyword>
<keyword id="KW-0067">ATP-binding</keyword>
<keyword id="KW-0963">Cytoplasm</keyword>
<keyword id="KW-0436">Ligase</keyword>
<keyword id="KW-0547">Nucleotide-binding</keyword>
<keyword id="KW-0648">Protein biosynthesis</keyword>
<feature type="chain" id="PRO_0000110959" description="Aspartate--tRNA ligase">
    <location>
        <begin position="1"/>
        <end position="582"/>
    </location>
</feature>
<feature type="region of interest" description="Aspartate" evidence="1">
    <location>
        <begin position="198"/>
        <end position="201"/>
    </location>
</feature>
<feature type="binding site" evidence="1">
    <location>
        <position position="174"/>
    </location>
    <ligand>
        <name>L-aspartate</name>
        <dbReference type="ChEBI" id="CHEBI:29991"/>
    </ligand>
</feature>
<feature type="binding site" evidence="1">
    <location>
        <begin position="220"/>
        <end position="222"/>
    </location>
    <ligand>
        <name>ATP</name>
        <dbReference type="ChEBI" id="CHEBI:30616"/>
    </ligand>
</feature>
<feature type="binding site" evidence="1">
    <location>
        <position position="220"/>
    </location>
    <ligand>
        <name>L-aspartate</name>
        <dbReference type="ChEBI" id="CHEBI:29991"/>
    </ligand>
</feature>
<feature type="binding site" evidence="1">
    <location>
        <position position="229"/>
    </location>
    <ligand>
        <name>ATP</name>
        <dbReference type="ChEBI" id="CHEBI:30616"/>
    </ligand>
</feature>
<feature type="binding site" evidence="1">
    <location>
        <position position="443"/>
    </location>
    <ligand>
        <name>L-aspartate</name>
        <dbReference type="ChEBI" id="CHEBI:29991"/>
    </ligand>
</feature>
<feature type="binding site" evidence="1">
    <location>
        <position position="477"/>
    </location>
    <ligand>
        <name>ATP</name>
        <dbReference type="ChEBI" id="CHEBI:30616"/>
    </ligand>
</feature>
<feature type="binding site" evidence="1">
    <location>
        <position position="484"/>
    </location>
    <ligand>
        <name>L-aspartate</name>
        <dbReference type="ChEBI" id="CHEBI:29991"/>
    </ligand>
</feature>
<feature type="binding site" evidence="1">
    <location>
        <begin position="529"/>
        <end position="532"/>
    </location>
    <ligand>
        <name>ATP</name>
        <dbReference type="ChEBI" id="CHEBI:30616"/>
    </ligand>
</feature>
<proteinExistence type="inferred from homology"/>